<feature type="chain" id="PRO_0000357920" description="NADH-quinone oxidoreductase subunit D">
    <location>
        <begin position="1"/>
        <end position="407"/>
    </location>
</feature>
<proteinExistence type="inferred from homology"/>
<organism>
    <name type="scientific">Roseobacter denitrificans (strain ATCC 33942 / OCh 114)</name>
    <name type="common">Erythrobacter sp. (strain OCh 114)</name>
    <name type="synonym">Roseobacter denitrificans</name>
    <dbReference type="NCBI Taxonomy" id="375451"/>
    <lineage>
        <taxon>Bacteria</taxon>
        <taxon>Pseudomonadati</taxon>
        <taxon>Pseudomonadota</taxon>
        <taxon>Alphaproteobacteria</taxon>
        <taxon>Rhodobacterales</taxon>
        <taxon>Roseobacteraceae</taxon>
        <taxon>Roseobacter</taxon>
    </lineage>
</organism>
<comment type="function">
    <text evidence="1">NDH-1 shuttles electrons from NADH, via FMN and iron-sulfur (Fe-S) centers, to quinones in the respiratory chain. The immediate electron acceptor for the enzyme in this species is believed to be ubiquinone. Couples the redox reaction to proton translocation (for every two electrons transferred, four hydrogen ions are translocated across the cytoplasmic membrane), and thus conserves the redox energy in a proton gradient.</text>
</comment>
<comment type="catalytic activity">
    <reaction evidence="1">
        <text>a quinone + NADH + 5 H(+)(in) = a quinol + NAD(+) + 4 H(+)(out)</text>
        <dbReference type="Rhea" id="RHEA:57888"/>
        <dbReference type="ChEBI" id="CHEBI:15378"/>
        <dbReference type="ChEBI" id="CHEBI:24646"/>
        <dbReference type="ChEBI" id="CHEBI:57540"/>
        <dbReference type="ChEBI" id="CHEBI:57945"/>
        <dbReference type="ChEBI" id="CHEBI:132124"/>
    </reaction>
</comment>
<comment type="subunit">
    <text evidence="1">NDH-1 is composed of 14 different subunits. Subunits NuoB, C, D, E, F, and G constitute the peripheral sector of the complex.</text>
</comment>
<comment type="subcellular location">
    <subcellularLocation>
        <location evidence="1">Cell inner membrane</location>
        <topology evidence="1">Peripheral membrane protein</topology>
        <orientation evidence="1">Cytoplasmic side</orientation>
    </subcellularLocation>
</comment>
<comment type="similarity">
    <text evidence="1">Belongs to the complex I 49 kDa subunit family.</text>
</comment>
<gene>
    <name evidence="1" type="primary">nuoD</name>
    <name type="ordered locus">RD1_3287</name>
</gene>
<keyword id="KW-0997">Cell inner membrane</keyword>
<keyword id="KW-1003">Cell membrane</keyword>
<keyword id="KW-0472">Membrane</keyword>
<keyword id="KW-0520">NAD</keyword>
<keyword id="KW-0874">Quinone</keyword>
<keyword id="KW-1185">Reference proteome</keyword>
<keyword id="KW-1278">Translocase</keyword>
<keyword id="KW-0813">Transport</keyword>
<keyword id="KW-0830">Ubiquinone</keyword>
<evidence type="ECO:0000255" key="1">
    <source>
        <dbReference type="HAMAP-Rule" id="MF_01358"/>
    </source>
</evidence>
<dbReference type="EC" id="7.1.1.-" evidence="1"/>
<dbReference type="EMBL" id="CP000362">
    <property type="protein sequence ID" value="ABG32788.1"/>
    <property type="molecule type" value="Genomic_DNA"/>
</dbReference>
<dbReference type="SMR" id="Q163Q5"/>
<dbReference type="STRING" id="375451.RD1_3287"/>
<dbReference type="KEGG" id="rde:RD1_3287"/>
<dbReference type="eggNOG" id="COG0649">
    <property type="taxonomic scope" value="Bacteria"/>
</dbReference>
<dbReference type="HOGENOM" id="CLU_015134_1_1_5"/>
<dbReference type="Proteomes" id="UP000007029">
    <property type="component" value="Chromosome"/>
</dbReference>
<dbReference type="GO" id="GO:0005886">
    <property type="term" value="C:plasma membrane"/>
    <property type="evidence" value="ECO:0007669"/>
    <property type="project" value="UniProtKB-SubCell"/>
</dbReference>
<dbReference type="GO" id="GO:0051287">
    <property type="term" value="F:NAD binding"/>
    <property type="evidence" value="ECO:0007669"/>
    <property type="project" value="InterPro"/>
</dbReference>
<dbReference type="GO" id="GO:0050136">
    <property type="term" value="F:NADH:ubiquinone reductase (non-electrogenic) activity"/>
    <property type="evidence" value="ECO:0007669"/>
    <property type="project" value="UniProtKB-UniRule"/>
</dbReference>
<dbReference type="GO" id="GO:0048038">
    <property type="term" value="F:quinone binding"/>
    <property type="evidence" value="ECO:0007669"/>
    <property type="project" value="UniProtKB-KW"/>
</dbReference>
<dbReference type="FunFam" id="1.10.645.10:FF:000005">
    <property type="entry name" value="NADH-quinone oxidoreductase subunit D"/>
    <property type="match status" value="1"/>
</dbReference>
<dbReference type="Gene3D" id="1.10.645.10">
    <property type="entry name" value="Cytochrome-c3 Hydrogenase, chain B"/>
    <property type="match status" value="1"/>
</dbReference>
<dbReference type="HAMAP" id="MF_01358">
    <property type="entry name" value="NDH1_NuoD"/>
    <property type="match status" value="1"/>
</dbReference>
<dbReference type="InterPro" id="IPR001135">
    <property type="entry name" value="NADH_Q_OxRdtase_suD"/>
</dbReference>
<dbReference type="InterPro" id="IPR014029">
    <property type="entry name" value="NADH_UbQ_OxRdtase_49kDa_CS"/>
</dbReference>
<dbReference type="InterPro" id="IPR022885">
    <property type="entry name" value="NDH1_su_D/H"/>
</dbReference>
<dbReference type="InterPro" id="IPR029014">
    <property type="entry name" value="NiFe-Hase_large"/>
</dbReference>
<dbReference type="NCBIfam" id="TIGR01962">
    <property type="entry name" value="NuoD"/>
    <property type="match status" value="1"/>
</dbReference>
<dbReference type="NCBIfam" id="NF004739">
    <property type="entry name" value="PRK06075.1"/>
    <property type="match status" value="1"/>
</dbReference>
<dbReference type="PANTHER" id="PTHR11993:SF10">
    <property type="entry name" value="NADH DEHYDROGENASE [UBIQUINONE] IRON-SULFUR PROTEIN 2, MITOCHONDRIAL"/>
    <property type="match status" value="1"/>
</dbReference>
<dbReference type="PANTHER" id="PTHR11993">
    <property type="entry name" value="NADH-UBIQUINONE OXIDOREDUCTASE 49 KDA SUBUNIT"/>
    <property type="match status" value="1"/>
</dbReference>
<dbReference type="Pfam" id="PF00346">
    <property type="entry name" value="Complex1_49kDa"/>
    <property type="match status" value="1"/>
</dbReference>
<dbReference type="SUPFAM" id="SSF56762">
    <property type="entry name" value="HydB/Nqo4-like"/>
    <property type="match status" value="1"/>
</dbReference>
<dbReference type="PROSITE" id="PS00535">
    <property type="entry name" value="COMPLEX1_49K"/>
    <property type="match status" value="1"/>
</dbReference>
<protein>
    <recommendedName>
        <fullName evidence="1">NADH-quinone oxidoreductase subunit D</fullName>
        <ecNumber evidence="1">7.1.1.-</ecNumber>
    </recommendedName>
    <alternativeName>
        <fullName evidence="1">NADH dehydrogenase I subunit D</fullName>
    </alternativeName>
    <alternativeName>
        <fullName evidence="1">NDH-1 subunit D</fullName>
    </alternativeName>
</protein>
<sequence>MMDGTKGFEDALTGEQKIRNFNINFGPQHPAAHGVLRLVLELDGEIVERCDPHIGLLHRGTEKLMESRTYLQNLPYFDRLDYVAPMNQEHAWCLAIEKLTGVEVPRRASLIRVLFCEIGRILNHILNITTQAMDVGALTPPLWGFEEREKLMVFYERASGARLHAAYFRPGGVHQDLPPALIDDIETWAHEFPRVIDDIDGLLTENRIFKQRNADIGVVTEEDILEYGFSGVMVRGSGLAWDLRRAQPYERYDEFDFQIPIGKNGDCYDRYLVRMEEMRQSLSIILQAIAKLRAPEGQGDVLARGKITPPSRSDMKTSMESLIHHFKLYTEGFHVPAGEVYACVEAPKGEFGVYLVADGTNKPYRAKIRAPGFLHLQAMDHMSRGHQLADVAAIIGTMDVVFGEIDR</sequence>
<reference key="1">
    <citation type="journal article" date="2007" name="J. Bacteriol.">
        <title>The complete genome sequence of Roseobacter denitrificans reveals a mixotrophic rather than photosynthetic metabolism.</title>
        <authorList>
            <person name="Swingley W.D."/>
            <person name="Sadekar S."/>
            <person name="Mastrian S.D."/>
            <person name="Matthies H.J."/>
            <person name="Hao J."/>
            <person name="Ramos H."/>
            <person name="Acharya C.R."/>
            <person name="Conrad A.L."/>
            <person name="Taylor H.L."/>
            <person name="Dejesa L.C."/>
            <person name="Shah M.K."/>
            <person name="O'Huallachain M.E."/>
            <person name="Lince M.T."/>
            <person name="Blankenship R.E."/>
            <person name="Beatty J.T."/>
            <person name="Touchman J.W."/>
        </authorList>
    </citation>
    <scope>NUCLEOTIDE SEQUENCE [LARGE SCALE GENOMIC DNA]</scope>
    <source>
        <strain>ATCC 33942 / OCh 114</strain>
    </source>
</reference>
<accession>Q163Q5</accession>
<name>NUOD_ROSDO</name>